<keyword id="KW-0687">Ribonucleoprotein</keyword>
<keyword id="KW-0689">Ribosomal protein</keyword>
<keyword id="KW-0694">RNA-binding</keyword>
<keyword id="KW-0699">rRNA-binding</keyword>
<reference key="1">
    <citation type="submission" date="2007-04" db="EMBL/GenBank/DDBJ databases">
        <title>Complete sequence of Roseiflexus sp. RS-1.</title>
        <authorList>
            <consortium name="US DOE Joint Genome Institute"/>
            <person name="Copeland A."/>
            <person name="Lucas S."/>
            <person name="Lapidus A."/>
            <person name="Barry K."/>
            <person name="Detter J.C."/>
            <person name="Glavina del Rio T."/>
            <person name="Hammon N."/>
            <person name="Israni S."/>
            <person name="Dalin E."/>
            <person name="Tice H."/>
            <person name="Pitluck S."/>
            <person name="Chertkov O."/>
            <person name="Brettin T."/>
            <person name="Bruce D."/>
            <person name="Han C."/>
            <person name="Schmutz J."/>
            <person name="Larimer F."/>
            <person name="Land M."/>
            <person name="Hauser L."/>
            <person name="Kyrpides N."/>
            <person name="Mikhailova N."/>
            <person name="Bryant D.A."/>
            <person name="Richardson P."/>
        </authorList>
    </citation>
    <scope>NUCLEOTIDE SEQUENCE [LARGE SCALE GENOMIC DNA]</scope>
    <source>
        <strain>RS-1</strain>
    </source>
</reference>
<protein>
    <recommendedName>
        <fullName evidence="1">Large ribosomal subunit protein uL22</fullName>
    </recommendedName>
    <alternativeName>
        <fullName evidence="2">50S ribosomal protein L22</fullName>
    </alternativeName>
</protein>
<feature type="chain" id="PRO_1000052641" description="Large ribosomal subunit protein uL22">
    <location>
        <begin position="1"/>
        <end position="113"/>
    </location>
</feature>
<comment type="function">
    <text evidence="1">This protein binds specifically to 23S rRNA; its binding is stimulated by other ribosomal proteins, e.g. L4, L17, and L20. It is important during the early stages of 50S assembly. It makes multiple contacts with different domains of the 23S rRNA in the assembled 50S subunit and ribosome (By similarity).</text>
</comment>
<comment type="function">
    <text evidence="1">The globular domain of the protein is located near the polypeptide exit tunnel on the outside of the subunit, while an extended beta-hairpin is found that lines the wall of the exit tunnel in the center of the 70S ribosome.</text>
</comment>
<comment type="subunit">
    <text evidence="1">Part of the 50S ribosomal subunit.</text>
</comment>
<comment type="similarity">
    <text evidence="1">Belongs to the universal ribosomal protein uL22 family.</text>
</comment>
<name>RL22_ROSS1</name>
<gene>
    <name evidence="1" type="primary">rplV</name>
    <name type="ordered locus">RoseRS_1180</name>
</gene>
<accession>A5USI4</accession>
<sequence>MQAKAVTKYVRISPTKVRPVMDLVRGKPVDRALAILRYLPHKAAREIARTIESARANATNNYDMAPDALIVKYIFADEGPAFKRIMPRARGRADRIRKRTTHITVIVDDGEEM</sequence>
<proteinExistence type="inferred from homology"/>
<organism>
    <name type="scientific">Roseiflexus sp. (strain RS-1)</name>
    <dbReference type="NCBI Taxonomy" id="357808"/>
    <lineage>
        <taxon>Bacteria</taxon>
        <taxon>Bacillati</taxon>
        <taxon>Chloroflexota</taxon>
        <taxon>Chloroflexia</taxon>
        <taxon>Chloroflexales</taxon>
        <taxon>Roseiflexineae</taxon>
        <taxon>Roseiflexaceae</taxon>
        <taxon>Roseiflexus</taxon>
    </lineage>
</organism>
<evidence type="ECO:0000255" key="1">
    <source>
        <dbReference type="HAMAP-Rule" id="MF_01331"/>
    </source>
</evidence>
<evidence type="ECO:0000305" key="2"/>
<dbReference type="EMBL" id="CP000686">
    <property type="protein sequence ID" value="ABQ89587.1"/>
    <property type="molecule type" value="Genomic_DNA"/>
</dbReference>
<dbReference type="RefSeq" id="WP_011955940.1">
    <property type="nucleotide sequence ID" value="NC_009523.1"/>
</dbReference>
<dbReference type="SMR" id="A5USI4"/>
<dbReference type="STRING" id="357808.RoseRS_1180"/>
<dbReference type="KEGG" id="rrs:RoseRS_1180"/>
<dbReference type="eggNOG" id="COG0091">
    <property type="taxonomic scope" value="Bacteria"/>
</dbReference>
<dbReference type="HOGENOM" id="CLU_083987_3_3_0"/>
<dbReference type="OrthoDB" id="9805969at2"/>
<dbReference type="Proteomes" id="UP000006554">
    <property type="component" value="Chromosome"/>
</dbReference>
<dbReference type="GO" id="GO:0022625">
    <property type="term" value="C:cytosolic large ribosomal subunit"/>
    <property type="evidence" value="ECO:0007669"/>
    <property type="project" value="TreeGrafter"/>
</dbReference>
<dbReference type="GO" id="GO:0019843">
    <property type="term" value="F:rRNA binding"/>
    <property type="evidence" value="ECO:0007669"/>
    <property type="project" value="UniProtKB-UniRule"/>
</dbReference>
<dbReference type="GO" id="GO:0003735">
    <property type="term" value="F:structural constituent of ribosome"/>
    <property type="evidence" value="ECO:0007669"/>
    <property type="project" value="InterPro"/>
</dbReference>
<dbReference type="GO" id="GO:0006412">
    <property type="term" value="P:translation"/>
    <property type="evidence" value="ECO:0007669"/>
    <property type="project" value="UniProtKB-UniRule"/>
</dbReference>
<dbReference type="CDD" id="cd00336">
    <property type="entry name" value="Ribosomal_L22"/>
    <property type="match status" value="1"/>
</dbReference>
<dbReference type="Gene3D" id="3.90.470.10">
    <property type="entry name" value="Ribosomal protein L22/L17"/>
    <property type="match status" value="1"/>
</dbReference>
<dbReference type="HAMAP" id="MF_01331_B">
    <property type="entry name" value="Ribosomal_uL22_B"/>
    <property type="match status" value="1"/>
</dbReference>
<dbReference type="InterPro" id="IPR001063">
    <property type="entry name" value="Ribosomal_uL22"/>
</dbReference>
<dbReference type="InterPro" id="IPR005727">
    <property type="entry name" value="Ribosomal_uL22_bac/chlpt-type"/>
</dbReference>
<dbReference type="InterPro" id="IPR047867">
    <property type="entry name" value="Ribosomal_uL22_bac/org-type"/>
</dbReference>
<dbReference type="InterPro" id="IPR018260">
    <property type="entry name" value="Ribosomal_uL22_CS"/>
</dbReference>
<dbReference type="InterPro" id="IPR036394">
    <property type="entry name" value="Ribosomal_uL22_sf"/>
</dbReference>
<dbReference type="NCBIfam" id="TIGR01044">
    <property type="entry name" value="rplV_bact"/>
    <property type="match status" value="1"/>
</dbReference>
<dbReference type="PANTHER" id="PTHR13501">
    <property type="entry name" value="CHLOROPLAST 50S RIBOSOMAL PROTEIN L22-RELATED"/>
    <property type="match status" value="1"/>
</dbReference>
<dbReference type="PANTHER" id="PTHR13501:SF8">
    <property type="entry name" value="LARGE RIBOSOMAL SUBUNIT PROTEIN UL22M"/>
    <property type="match status" value="1"/>
</dbReference>
<dbReference type="Pfam" id="PF00237">
    <property type="entry name" value="Ribosomal_L22"/>
    <property type="match status" value="1"/>
</dbReference>
<dbReference type="SUPFAM" id="SSF54843">
    <property type="entry name" value="Ribosomal protein L22"/>
    <property type="match status" value="1"/>
</dbReference>
<dbReference type="PROSITE" id="PS00464">
    <property type="entry name" value="RIBOSOMAL_L22"/>
    <property type="match status" value="1"/>
</dbReference>